<gene>
    <name evidence="1" type="primary">rpl20</name>
</gene>
<feature type="chain" id="PRO_0000177303" description="Large ribosomal subunit protein bL20c">
    <location>
        <begin position="1"/>
        <end position="115"/>
    </location>
</feature>
<comment type="function">
    <text evidence="1">Binds directly to 23S ribosomal RNA and is necessary for the in vitro assembly process of the 50S ribosomal subunit. It is not involved in the protein synthesizing functions of that subunit.</text>
</comment>
<comment type="subcellular location">
    <subcellularLocation>
        <location>Plastid</location>
        <location>Chloroplast</location>
    </subcellularLocation>
</comment>
<comment type="similarity">
    <text evidence="1">Belongs to the bacterial ribosomal protein bL20 family.</text>
</comment>
<evidence type="ECO:0000255" key="1">
    <source>
        <dbReference type="HAMAP-Rule" id="MF_00382"/>
    </source>
</evidence>
<evidence type="ECO:0000305" key="2"/>
<reference key="1">
    <citation type="journal article" date="2003" name="Nucleic Acids Res.">
        <title>Complete chloroplast DNA sequence of the moss Physcomitrella patens: evidence for the loss and relocation of rpoA from the chloroplast to the nucleus.</title>
        <authorList>
            <person name="Sugiura C."/>
            <person name="Kobayashi Y."/>
            <person name="Setsuyuki A."/>
            <person name="Sugita C."/>
            <person name="Sugita M."/>
        </authorList>
    </citation>
    <scope>NUCLEOTIDE SEQUENCE [LARGE SCALE GENOMIC DNA]</scope>
    <source>
        <strain>cv. Gransden 2004</strain>
    </source>
</reference>
<name>RK20_PHYPA</name>
<keyword id="KW-0150">Chloroplast</keyword>
<keyword id="KW-0934">Plastid</keyword>
<keyword id="KW-1185">Reference proteome</keyword>
<keyword id="KW-0687">Ribonucleoprotein</keyword>
<keyword id="KW-0689">Ribosomal protein</keyword>
<keyword id="KW-0694">RNA-binding</keyword>
<keyword id="KW-0699">rRNA-binding</keyword>
<dbReference type="EMBL" id="AP005672">
    <property type="protein sequence ID" value="BAC85027.1"/>
    <property type="molecule type" value="Genomic_DNA"/>
</dbReference>
<dbReference type="RefSeq" id="NP_904177.1">
    <property type="nucleotide sequence ID" value="NC_005087.2"/>
</dbReference>
<dbReference type="RefSeq" id="YP_009477508.1">
    <property type="nucleotide sequence ID" value="NC_037465.1"/>
</dbReference>
<dbReference type="SMR" id="Q6YXM5"/>
<dbReference type="FunCoup" id="Q6YXM5">
    <property type="interactions" value="83"/>
</dbReference>
<dbReference type="STRING" id="3218.Q6YXM5"/>
<dbReference type="GeneID" id="2546799"/>
<dbReference type="GeneID" id="36487120"/>
<dbReference type="KEGG" id="ppp:2546799"/>
<dbReference type="InParanoid" id="Q6YXM5"/>
<dbReference type="OrthoDB" id="512793at2759"/>
<dbReference type="Proteomes" id="UP000006727">
    <property type="component" value="Chloroplast"/>
</dbReference>
<dbReference type="GO" id="GO:0009507">
    <property type="term" value="C:chloroplast"/>
    <property type="evidence" value="ECO:0007669"/>
    <property type="project" value="UniProtKB-SubCell"/>
</dbReference>
<dbReference type="GO" id="GO:1990904">
    <property type="term" value="C:ribonucleoprotein complex"/>
    <property type="evidence" value="ECO:0007669"/>
    <property type="project" value="UniProtKB-KW"/>
</dbReference>
<dbReference type="GO" id="GO:0005840">
    <property type="term" value="C:ribosome"/>
    <property type="evidence" value="ECO:0007669"/>
    <property type="project" value="UniProtKB-KW"/>
</dbReference>
<dbReference type="GO" id="GO:0019843">
    <property type="term" value="F:rRNA binding"/>
    <property type="evidence" value="ECO:0007669"/>
    <property type="project" value="UniProtKB-UniRule"/>
</dbReference>
<dbReference type="GO" id="GO:0003735">
    <property type="term" value="F:structural constituent of ribosome"/>
    <property type="evidence" value="ECO:0000318"/>
    <property type="project" value="GO_Central"/>
</dbReference>
<dbReference type="GO" id="GO:0000027">
    <property type="term" value="P:ribosomal large subunit assembly"/>
    <property type="evidence" value="ECO:0007669"/>
    <property type="project" value="UniProtKB-UniRule"/>
</dbReference>
<dbReference type="GO" id="GO:0006412">
    <property type="term" value="P:translation"/>
    <property type="evidence" value="ECO:0007669"/>
    <property type="project" value="InterPro"/>
</dbReference>
<dbReference type="CDD" id="cd07026">
    <property type="entry name" value="Ribosomal_L20"/>
    <property type="match status" value="1"/>
</dbReference>
<dbReference type="FunFam" id="1.10.1900.20:FF:000001">
    <property type="entry name" value="50S ribosomal protein L20"/>
    <property type="match status" value="1"/>
</dbReference>
<dbReference type="Gene3D" id="6.10.160.10">
    <property type="match status" value="1"/>
</dbReference>
<dbReference type="Gene3D" id="1.10.1900.20">
    <property type="entry name" value="Ribosomal protein L20"/>
    <property type="match status" value="1"/>
</dbReference>
<dbReference type="HAMAP" id="MF_00382">
    <property type="entry name" value="Ribosomal_bL20"/>
    <property type="match status" value="1"/>
</dbReference>
<dbReference type="InterPro" id="IPR005813">
    <property type="entry name" value="Ribosomal_bL20"/>
</dbReference>
<dbReference type="InterPro" id="IPR049946">
    <property type="entry name" value="RIBOSOMAL_L20_CS"/>
</dbReference>
<dbReference type="InterPro" id="IPR035566">
    <property type="entry name" value="Ribosomal_protein_bL20_C"/>
</dbReference>
<dbReference type="NCBIfam" id="TIGR01032">
    <property type="entry name" value="rplT_bact"/>
    <property type="match status" value="1"/>
</dbReference>
<dbReference type="PANTHER" id="PTHR10986">
    <property type="entry name" value="39S RIBOSOMAL PROTEIN L20"/>
    <property type="match status" value="1"/>
</dbReference>
<dbReference type="Pfam" id="PF00453">
    <property type="entry name" value="Ribosomal_L20"/>
    <property type="match status" value="1"/>
</dbReference>
<dbReference type="PRINTS" id="PR00062">
    <property type="entry name" value="RIBOSOMALL20"/>
</dbReference>
<dbReference type="SUPFAM" id="SSF74731">
    <property type="entry name" value="Ribosomal protein L20"/>
    <property type="match status" value="1"/>
</dbReference>
<dbReference type="PROSITE" id="PS00937">
    <property type="entry name" value="RIBOSOMAL_L20"/>
    <property type="match status" value="1"/>
</dbReference>
<accession>Q6YXM5</accession>
<protein>
    <recommendedName>
        <fullName evidence="1">Large ribosomal subunit protein bL20c</fullName>
    </recommendedName>
    <alternativeName>
        <fullName evidence="2">50S ribosomal protein L20, chloroplastic</fullName>
    </alternativeName>
</protein>
<geneLocation type="chloroplast"/>
<organism>
    <name type="scientific">Physcomitrium patens</name>
    <name type="common">Spreading-leaved earth moss</name>
    <name type="synonym">Physcomitrella patens</name>
    <dbReference type="NCBI Taxonomy" id="3218"/>
    <lineage>
        <taxon>Eukaryota</taxon>
        <taxon>Viridiplantae</taxon>
        <taxon>Streptophyta</taxon>
        <taxon>Embryophyta</taxon>
        <taxon>Bryophyta</taxon>
        <taxon>Bryophytina</taxon>
        <taxon>Bryopsida</taxon>
        <taxon>Funariidae</taxon>
        <taxon>Funariales</taxon>
        <taxon>Funariaceae</taxon>
        <taxon>Physcomitrium</taxon>
    </lineage>
</organism>
<sequence>MTRVKRGYVARKRRKNIFTLTSGFQGAHSKLFRTANQQGMRALASSYRDRNRRKRDLRRLWITRINAAARNNGISYNKLIQNLYQNQILLNRKMLAQIALLDTNCFSTIMKKINE</sequence>
<proteinExistence type="inferred from homology"/>